<reference key="1">
    <citation type="submission" date="2002-03" db="EMBL/GenBank/DDBJ databases">
        <title>Genes and peptides from the scorpion Centruroides limpidus limpidus, that recognize Na(+)-channels.</title>
        <authorList>
            <person name="Corona M."/>
            <person name="Possani L.D."/>
        </authorList>
    </citation>
    <scope>NUCLEOTIDE SEQUENCE [MRNA]</scope>
</reference>
<comment type="function">
    <text evidence="1">Beta toxins bind voltage-independently at site-4 of sodium channels (Nav) and shift the voltage of activation toward more negative potentials thereby affecting sodium channel activation and promoting spontaneous and repetitive firing.</text>
</comment>
<comment type="subcellular location">
    <subcellularLocation>
        <location evidence="1">Secreted</location>
    </subcellularLocation>
</comment>
<comment type="tissue specificity">
    <text>Expressed by the venom gland.</text>
</comment>
<comment type="domain">
    <text evidence="3">Has the structural arrangement of an alpha-helix connected to antiparallel beta-sheets by disulfide bonds (CS-alpha/beta).</text>
</comment>
<comment type="similarity">
    <text evidence="3">Belongs to the long (4 C-C) scorpion toxin superfamily. Sodium channel inhibitor family. Beta subfamily.</text>
</comment>
<keyword id="KW-0027">Amidation</keyword>
<keyword id="KW-1015">Disulfide bond</keyword>
<keyword id="KW-0872">Ion channel impairing toxin</keyword>
<keyword id="KW-0528">Neurotoxin</keyword>
<keyword id="KW-0964">Secreted</keyword>
<keyword id="KW-0732">Signal</keyword>
<keyword id="KW-0800">Toxin</keyword>
<keyword id="KW-0738">Voltage-gated sodium channel impairing toxin</keyword>
<organism>
    <name type="scientific">Centruroides limpidus</name>
    <name type="common">Mexican scorpion</name>
    <dbReference type="NCBI Taxonomy" id="6876"/>
    <lineage>
        <taxon>Eukaryota</taxon>
        <taxon>Metazoa</taxon>
        <taxon>Ecdysozoa</taxon>
        <taxon>Arthropoda</taxon>
        <taxon>Chelicerata</taxon>
        <taxon>Arachnida</taxon>
        <taxon>Scorpiones</taxon>
        <taxon>Buthida</taxon>
        <taxon>Buthoidea</taxon>
        <taxon>Buthidae</taxon>
        <taxon>Centruroides</taxon>
    </lineage>
</organism>
<protein>
    <recommendedName>
        <fullName>Toxin Cll6</fullName>
    </recommendedName>
</protein>
<name>SCX6_CENLI</name>
<feature type="signal peptide" evidence="1">
    <location>
        <begin position="1"/>
        <end position="19"/>
    </location>
</feature>
<feature type="chain" id="PRO_0000035275" description="Toxin Cll6">
    <location>
        <begin position="20"/>
        <end position="83"/>
    </location>
</feature>
<feature type="domain" description="LCN-type CS-alpha/beta" evidence="2">
    <location>
        <begin position="20"/>
        <end position="83"/>
    </location>
</feature>
<feature type="modified residue" description="Serine amide" evidence="1">
    <location>
        <position position="83"/>
    </location>
</feature>
<feature type="disulfide bond" evidence="2">
    <location>
        <begin position="31"/>
        <end position="82"/>
    </location>
</feature>
<feature type="disulfide bond" evidence="2">
    <location>
        <begin position="35"/>
        <end position="58"/>
    </location>
</feature>
<feature type="disulfide bond" evidence="2">
    <location>
        <begin position="44"/>
        <end position="63"/>
    </location>
</feature>
<feature type="disulfide bond" evidence="2">
    <location>
        <begin position="48"/>
        <end position="65"/>
    </location>
</feature>
<sequence length="85" mass="9323">MNSLLMIIGCLVLIGTVWTKEGYLVNMKTGCKYGCYELGDNGYCDRKCKAESGNYGYCYTVGCWCEGLPNSKPTWPLPGKSCSGK</sequence>
<dbReference type="EMBL" id="AF491132">
    <property type="protein sequence ID" value="AAP49507.1"/>
    <property type="molecule type" value="mRNA"/>
</dbReference>
<dbReference type="SMR" id="Q7Z1K5"/>
<dbReference type="GO" id="GO:0005576">
    <property type="term" value="C:extracellular region"/>
    <property type="evidence" value="ECO:0007669"/>
    <property type="project" value="UniProtKB-SubCell"/>
</dbReference>
<dbReference type="GO" id="GO:0019871">
    <property type="term" value="F:sodium channel inhibitor activity"/>
    <property type="evidence" value="ECO:0007669"/>
    <property type="project" value="InterPro"/>
</dbReference>
<dbReference type="GO" id="GO:0090729">
    <property type="term" value="F:toxin activity"/>
    <property type="evidence" value="ECO:0007669"/>
    <property type="project" value="UniProtKB-KW"/>
</dbReference>
<dbReference type="GO" id="GO:0006952">
    <property type="term" value="P:defense response"/>
    <property type="evidence" value="ECO:0007669"/>
    <property type="project" value="InterPro"/>
</dbReference>
<dbReference type="CDD" id="cd23106">
    <property type="entry name" value="neurotoxins_LC_scorpion"/>
    <property type="match status" value="1"/>
</dbReference>
<dbReference type="FunFam" id="3.30.30.10:FF:000002">
    <property type="entry name" value="Alpha-like toxin BmK-M1"/>
    <property type="match status" value="1"/>
</dbReference>
<dbReference type="Gene3D" id="3.30.30.10">
    <property type="entry name" value="Knottin, scorpion toxin-like"/>
    <property type="match status" value="1"/>
</dbReference>
<dbReference type="InterPro" id="IPR044062">
    <property type="entry name" value="LCN-type_CS_alpha_beta_dom"/>
</dbReference>
<dbReference type="InterPro" id="IPR003614">
    <property type="entry name" value="Scorpion_toxin-like"/>
</dbReference>
<dbReference type="InterPro" id="IPR036574">
    <property type="entry name" value="Scorpion_toxin-like_sf"/>
</dbReference>
<dbReference type="InterPro" id="IPR018218">
    <property type="entry name" value="Scorpion_toxinL"/>
</dbReference>
<dbReference type="InterPro" id="IPR002061">
    <property type="entry name" value="Scorpion_toxinL/defensin"/>
</dbReference>
<dbReference type="Pfam" id="PF00537">
    <property type="entry name" value="Toxin_3"/>
    <property type="match status" value="1"/>
</dbReference>
<dbReference type="PRINTS" id="PR00285">
    <property type="entry name" value="SCORPNTOXIN"/>
</dbReference>
<dbReference type="SMART" id="SM00505">
    <property type="entry name" value="Knot1"/>
    <property type="match status" value="1"/>
</dbReference>
<dbReference type="SUPFAM" id="SSF57095">
    <property type="entry name" value="Scorpion toxin-like"/>
    <property type="match status" value="1"/>
</dbReference>
<dbReference type="PROSITE" id="PS51863">
    <property type="entry name" value="LCN_CSAB"/>
    <property type="match status" value="1"/>
</dbReference>
<proteinExistence type="evidence at transcript level"/>
<evidence type="ECO:0000250" key="1"/>
<evidence type="ECO:0000255" key="2">
    <source>
        <dbReference type="PROSITE-ProRule" id="PRU01210"/>
    </source>
</evidence>
<evidence type="ECO:0000305" key="3"/>
<accession>Q7Z1K5</accession>